<comment type="function">
    <text evidence="1">Seems to be required for the assembly of the photosystem I complex.</text>
</comment>
<comment type="subcellular location">
    <subcellularLocation>
        <location evidence="1">Plastid</location>
        <location evidence="1">Chloroplast thylakoid membrane</location>
        <topology evidence="1">Multi-pass membrane protein</topology>
    </subcellularLocation>
</comment>
<comment type="similarity">
    <text evidence="1">Belongs to the Ycf4 family.</text>
</comment>
<feature type="chain" id="PRO_0000325996" description="Photosystem I assembly protein Ycf4">
    <location>
        <begin position="1"/>
        <end position="184"/>
    </location>
</feature>
<feature type="transmembrane region" description="Helical" evidence="1">
    <location>
        <begin position="22"/>
        <end position="42"/>
    </location>
</feature>
<feature type="transmembrane region" description="Helical" evidence="1">
    <location>
        <begin position="57"/>
        <end position="77"/>
    </location>
</feature>
<accession>A4QKB6</accession>
<proteinExistence type="inferred from homology"/>
<dbReference type="EMBL" id="AP009370">
    <property type="protein sequence ID" value="BAF50121.1"/>
    <property type="molecule type" value="Genomic_DNA"/>
</dbReference>
<dbReference type="RefSeq" id="YP_001123297.1">
    <property type="nucleotide sequence ID" value="NC_009269.1"/>
</dbReference>
<dbReference type="GeneID" id="4961895"/>
<dbReference type="GO" id="GO:0009535">
    <property type="term" value="C:chloroplast thylakoid membrane"/>
    <property type="evidence" value="ECO:0007669"/>
    <property type="project" value="UniProtKB-SubCell"/>
</dbReference>
<dbReference type="GO" id="GO:0009522">
    <property type="term" value="C:photosystem I"/>
    <property type="evidence" value="ECO:0007669"/>
    <property type="project" value="InterPro"/>
</dbReference>
<dbReference type="GO" id="GO:0015979">
    <property type="term" value="P:photosynthesis"/>
    <property type="evidence" value="ECO:0007669"/>
    <property type="project" value="UniProtKB-UniRule"/>
</dbReference>
<dbReference type="HAMAP" id="MF_00437">
    <property type="entry name" value="Ycf4"/>
    <property type="match status" value="1"/>
</dbReference>
<dbReference type="InterPro" id="IPR003359">
    <property type="entry name" value="PSI_Ycf4_assembly"/>
</dbReference>
<dbReference type="PANTHER" id="PTHR33288">
    <property type="match status" value="1"/>
</dbReference>
<dbReference type="PANTHER" id="PTHR33288:SF4">
    <property type="entry name" value="PHOTOSYSTEM I ASSEMBLY PROTEIN YCF4"/>
    <property type="match status" value="1"/>
</dbReference>
<dbReference type="Pfam" id="PF02392">
    <property type="entry name" value="Ycf4"/>
    <property type="match status" value="1"/>
</dbReference>
<keyword id="KW-0150">Chloroplast</keyword>
<keyword id="KW-0472">Membrane</keyword>
<keyword id="KW-0602">Photosynthesis</keyword>
<keyword id="KW-0934">Plastid</keyword>
<keyword id="KW-0793">Thylakoid</keyword>
<keyword id="KW-0812">Transmembrane</keyword>
<keyword id="KW-1133">Transmembrane helix</keyword>
<protein>
    <recommendedName>
        <fullName evidence="1">Photosystem I assembly protein Ycf4</fullName>
    </recommendedName>
</protein>
<name>YCF4_BARVE</name>
<reference key="1">
    <citation type="submission" date="2007-03" db="EMBL/GenBank/DDBJ databases">
        <title>Sequencing analysis of Barbarea verna chloroplast DNA.</title>
        <authorList>
            <person name="Hosouchi T."/>
            <person name="Tsuruoka H."/>
            <person name="Kotani H."/>
        </authorList>
    </citation>
    <scope>NUCLEOTIDE SEQUENCE [LARGE SCALE GENOMIC DNA]</scope>
</reference>
<gene>
    <name evidence="1" type="primary">ycf4</name>
</gene>
<evidence type="ECO:0000255" key="1">
    <source>
        <dbReference type="HAMAP-Rule" id="MF_00437"/>
    </source>
</evidence>
<sequence length="184" mass="21407">MSWRSESIWIEFITGSRKTSNFCWAFILFLGSLGFLLVGTSSYLGRNVISLFPSQQIIFFPQGIVMSFYGIAGLFISCYLWCTILWNVGSGYDLFDRKEGIVRIFRWGFPGKSRRIFLRFFMKDIQSIRIEVKEGVSARRVLYMEIRGQGAIPLIRTDENFTTREIEQKAAELAYFLRVPIEVF</sequence>
<organism>
    <name type="scientific">Barbarea verna</name>
    <name type="common">Land cress</name>
    <name type="synonym">Erysimum vernum</name>
    <dbReference type="NCBI Taxonomy" id="50458"/>
    <lineage>
        <taxon>Eukaryota</taxon>
        <taxon>Viridiplantae</taxon>
        <taxon>Streptophyta</taxon>
        <taxon>Embryophyta</taxon>
        <taxon>Tracheophyta</taxon>
        <taxon>Spermatophyta</taxon>
        <taxon>Magnoliopsida</taxon>
        <taxon>eudicotyledons</taxon>
        <taxon>Gunneridae</taxon>
        <taxon>Pentapetalae</taxon>
        <taxon>rosids</taxon>
        <taxon>malvids</taxon>
        <taxon>Brassicales</taxon>
        <taxon>Brassicaceae</taxon>
        <taxon>Cardamineae</taxon>
        <taxon>Barbarea</taxon>
    </lineage>
</organism>
<geneLocation type="chloroplast"/>